<evidence type="ECO:0000250" key="1">
    <source>
        <dbReference type="UniProtKB" id="P10905"/>
    </source>
</evidence>
<evidence type="ECO:0000255" key="2"/>
<evidence type="ECO:0000255" key="3">
    <source>
        <dbReference type="PROSITE-ProRule" id="PRU00441"/>
    </source>
</evidence>
<evidence type="ECO:0000305" key="4"/>
<protein>
    <recommendedName>
        <fullName evidence="1">sn-glycerol-3-phosphate transport system permease protein UgpA</fullName>
    </recommendedName>
</protein>
<sequence length="295" mass="33172">MSSSRPVFRSRWLPYLLVAPQLVITVIFFIWPAGEALWYSLQSVDPFGFSSQFVGLENFVALFHDSYYLDAFWTTIKFSALVTFSGLLVSLFFAALVDYVVRGSRFYQTLMLLPYAVAPAVAAVLWIFLFNPGRGLITHFLGEFGYDWNHAQNSGQAMFLVVFASVWKQISYNFLFFFAALQSIPRSLVEAAAIDGAGPIRRFFRLSLPLIAPVSFFLLVVNLVYAFFDTFPVIDAATAGGPVQATTTLIYKIYREGFTGLDLSASAAQSVVLMFLVIILTVVQFRYVESKVRYQ</sequence>
<reference key="1">
    <citation type="journal article" date="2001" name="Nature">
        <title>Complete genome sequence of Salmonella enterica serovar Typhimurium LT2.</title>
        <authorList>
            <person name="McClelland M."/>
            <person name="Sanderson K.E."/>
            <person name="Spieth J."/>
            <person name="Clifton S.W."/>
            <person name="Latreille P."/>
            <person name="Courtney L."/>
            <person name="Porwollik S."/>
            <person name="Ali J."/>
            <person name="Dante M."/>
            <person name="Du F."/>
            <person name="Hou S."/>
            <person name="Layman D."/>
            <person name="Leonard S."/>
            <person name="Nguyen C."/>
            <person name="Scott K."/>
            <person name="Holmes A."/>
            <person name="Grewal N."/>
            <person name="Mulvaney E."/>
            <person name="Ryan E."/>
            <person name="Sun H."/>
            <person name="Florea L."/>
            <person name="Miller W."/>
            <person name="Stoneking T."/>
            <person name="Nhan M."/>
            <person name="Waterston R."/>
            <person name="Wilson R.K."/>
        </authorList>
    </citation>
    <scope>NUCLEOTIDE SEQUENCE [LARGE SCALE GENOMIC DNA]</scope>
    <source>
        <strain>LT2 / SGSC1412 / ATCC 700720</strain>
    </source>
</reference>
<feature type="chain" id="PRO_0000292830" description="sn-glycerol-3-phosphate transport system permease protein UgpA">
    <location>
        <begin position="1"/>
        <end position="295"/>
    </location>
</feature>
<feature type="topological domain" description="Cytoplasmic" evidence="2">
    <location>
        <begin position="1"/>
        <end position="11"/>
    </location>
</feature>
<feature type="transmembrane region" description="Helical" evidence="3">
    <location>
        <begin position="12"/>
        <end position="32"/>
    </location>
</feature>
<feature type="topological domain" description="Periplasmic" evidence="2">
    <location>
        <begin position="33"/>
        <end position="80"/>
    </location>
</feature>
<feature type="transmembrane region" description="Helical" evidence="3">
    <location>
        <begin position="81"/>
        <end position="101"/>
    </location>
</feature>
<feature type="topological domain" description="Cytoplasmic" evidence="2">
    <location>
        <begin position="102"/>
        <end position="109"/>
    </location>
</feature>
<feature type="transmembrane region" description="Helical" evidence="3">
    <location>
        <begin position="110"/>
        <end position="130"/>
    </location>
</feature>
<feature type="topological domain" description="Periplasmic" evidence="2">
    <location>
        <begin position="131"/>
        <end position="157"/>
    </location>
</feature>
<feature type="transmembrane region" description="Helical" evidence="3">
    <location>
        <begin position="158"/>
        <end position="178"/>
    </location>
</feature>
<feature type="topological domain" description="Cytoplasmic" evidence="2">
    <location>
        <begin position="179"/>
        <end position="207"/>
    </location>
</feature>
<feature type="transmembrane region" description="Helical" evidence="3">
    <location>
        <begin position="208"/>
        <end position="228"/>
    </location>
</feature>
<feature type="topological domain" description="Periplasmic" evidence="2">
    <location>
        <begin position="229"/>
        <end position="262"/>
    </location>
</feature>
<feature type="transmembrane region" description="Helical" evidence="3">
    <location>
        <begin position="263"/>
        <end position="283"/>
    </location>
</feature>
<feature type="topological domain" description="Cytoplasmic" evidence="2">
    <location>
        <begin position="284"/>
        <end position="295"/>
    </location>
</feature>
<feature type="domain" description="ABC transmembrane type-1" evidence="3">
    <location>
        <begin position="76"/>
        <end position="284"/>
    </location>
</feature>
<accession>Q8ZLF2</accession>
<comment type="function">
    <text evidence="1">Part of the ABC transporter complex UgpBAEC involved in sn-glycerol-3-phosphate (G3P) import. Probably responsible for the translocation of the substrate across the membrane.</text>
</comment>
<comment type="subunit">
    <text evidence="1">The complex is composed of two ATP-binding proteins (UgpC), two transmembrane proteins (UgpA and UgpE) and a solute-binding protein (UgpB).</text>
</comment>
<comment type="subcellular location">
    <subcellularLocation>
        <location evidence="1">Cell inner membrane</location>
        <topology evidence="2">Multi-pass membrane protein</topology>
    </subcellularLocation>
</comment>
<comment type="similarity">
    <text evidence="4">Belongs to the binding-protein-dependent transport system permease family. UgpAE subfamily.</text>
</comment>
<name>UGPA_SALTY</name>
<dbReference type="EMBL" id="AE006468">
    <property type="protein sequence ID" value="AAL22416.1"/>
    <property type="molecule type" value="Genomic_DNA"/>
</dbReference>
<dbReference type="RefSeq" id="NP_462457.1">
    <property type="nucleotide sequence ID" value="NC_003197.2"/>
</dbReference>
<dbReference type="RefSeq" id="WP_000099303.1">
    <property type="nucleotide sequence ID" value="NC_003197.2"/>
</dbReference>
<dbReference type="SMR" id="Q8ZLF2"/>
<dbReference type="STRING" id="99287.STM3556"/>
<dbReference type="PaxDb" id="99287-STM3556"/>
<dbReference type="GeneID" id="1255079"/>
<dbReference type="KEGG" id="stm:STM3556"/>
<dbReference type="PATRIC" id="fig|99287.12.peg.3759"/>
<dbReference type="HOGENOM" id="CLU_016047_0_2_6"/>
<dbReference type="OMA" id="LWYSVQS"/>
<dbReference type="PhylomeDB" id="Q8ZLF2"/>
<dbReference type="BioCyc" id="SENT99287:STM3556-MONOMER"/>
<dbReference type="Proteomes" id="UP000001014">
    <property type="component" value="Chromosome"/>
</dbReference>
<dbReference type="GO" id="GO:0005886">
    <property type="term" value="C:plasma membrane"/>
    <property type="evidence" value="ECO:0007669"/>
    <property type="project" value="UniProtKB-SubCell"/>
</dbReference>
<dbReference type="GO" id="GO:0055085">
    <property type="term" value="P:transmembrane transport"/>
    <property type="evidence" value="ECO:0007669"/>
    <property type="project" value="InterPro"/>
</dbReference>
<dbReference type="CDD" id="cd06261">
    <property type="entry name" value="TM_PBP2"/>
    <property type="match status" value="1"/>
</dbReference>
<dbReference type="FunFam" id="1.10.3720.10:FF:000028">
    <property type="entry name" value="sn-glycerol-3-phosphate ABC transporter permease UgpA"/>
    <property type="match status" value="1"/>
</dbReference>
<dbReference type="Gene3D" id="1.10.3720.10">
    <property type="entry name" value="MetI-like"/>
    <property type="match status" value="1"/>
</dbReference>
<dbReference type="InterPro" id="IPR000515">
    <property type="entry name" value="MetI-like"/>
</dbReference>
<dbReference type="InterPro" id="IPR035906">
    <property type="entry name" value="MetI-like_sf"/>
</dbReference>
<dbReference type="InterPro" id="IPR050809">
    <property type="entry name" value="UgpAE/MalFG_permease"/>
</dbReference>
<dbReference type="NCBIfam" id="NF007852">
    <property type="entry name" value="PRK10561.1"/>
    <property type="match status" value="1"/>
</dbReference>
<dbReference type="PANTHER" id="PTHR43227">
    <property type="entry name" value="BLL4140 PROTEIN"/>
    <property type="match status" value="1"/>
</dbReference>
<dbReference type="PANTHER" id="PTHR43227:SF9">
    <property type="entry name" value="SN-GLYCEROL-3-PHOSPHATE TRANSPORT SYSTEM PERMEASE PROTEIN UGPA"/>
    <property type="match status" value="1"/>
</dbReference>
<dbReference type="Pfam" id="PF00528">
    <property type="entry name" value="BPD_transp_1"/>
    <property type="match status" value="1"/>
</dbReference>
<dbReference type="SUPFAM" id="SSF161098">
    <property type="entry name" value="MetI-like"/>
    <property type="match status" value="1"/>
</dbReference>
<dbReference type="PROSITE" id="PS50928">
    <property type="entry name" value="ABC_TM1"/>
    <property type="match status" value="1"/>
</dbReference>
<keyword id="KW-0997">Cell inner membrane</keyword>
<keyword id="KW-1003">Cell membrane</keyword>
<keyword id="KW-0472">Membrane</keyword>
<keyword id="KW-1185">Reference proteome</keyword>
<keyword id="KW-0812">Transmembrane</keyword>
<keyword id="KW-1133">Transmembrane helix</keyword>
<keyword id="KW-0813">Transport</keyword>
<organism>
    <name type="scientific">Salmonella typhimurium (strain LT2 / SGSC1412 / ATCC 700720)</name>
    <dbReference type="NCBI Taxonomy" id="99287"/>
    <lineage>
        <taxon>Bacteria</taxon>
        <taxon>Pseudomonadati</taxon>
        <taxon>Pseudomonadota</taxon>
        <taxon>Gammaproteobacteria</taxon>
        <taxon>Enterobacterales</taxon>
        <taxon>Enterobacteriaceae</taxon>
        <taxon>Salmonella</taxon>
    </lineage>
</organism>
<gene>
    <name type="primary">ugpA</name>
    <name type="ordered locus">STM3556</name>
</gene>
<proteinExistence type="inferred from homology"/>